<gene>
    <name type="ordered locus">PputGB1_4117</name>
</gene>
<dbReference type="EMBL" id="CP000926">
    <property type="protein sequence ID" value="ABZ00008.1"/>
    <property type="molecule type" value="Genomic_DNA"/>
</dbReference>
<dbReference type="KEGG" id="ppg:PputGB1_4117"/>
<dbReference type="eggNOG" id="COG2983">
    <property type="taxonomic scope" value="Bacteria"/>
</dbReference>
<dbReference type="HOGENOM" id="CLU_109769_0_1_6"/>
<dbReference type="Proteomes" id="UP000002157">
    <property type="component" value="Chromosome"/>
</dbReference>
<dbReference type="HAMAP" id="MF_00676">
    <property type="entry name" value="UPF0260"/>
    <property type="match status" value="1"/>
</dbReference>
<dbReference type="InterPro" id="IPR005358">
    <property type="entry name" value="Puta_zinc/iron-chelating_dom"/>
</dbReference>
<dbReference type="InterPro" id="IPR008228">
    <property type="entry name" value="UCP006173"/>
</dbReference>
<dbReference type="NCBIfam" id="NF003501">
    <property type="entry name" value="PRK05170.1-5"/>
    <property type="match status" value="1"/>
</dbReference>
<dbReference type="NCBIfam" id="NF003502">
    <property type="entry name" value="PRK05170.1-6"/>
    <property type="match status" value="1"/>
</dbReference>
<dbReference type="NCBIfam" id="NF003507">
    <property type="entry name" value="PRK05170.2-5"/>
    <property type="match status" value="1"/>
</dbReference>
<dbReference type="PANTHER" id="PTHR37421">
    <property type="entry name" value="UPF0260 PROTEIN YCGN"/>
    <property type="match status" value="1"/>
</dbReference>
<dbReference type="PANTHER" id="PTHR37421:SF1">
    <property type="entry name" value="UPF0260 PROTEIN YCGN"/>
    <property type="match status" value="1"/>
</dbReference>
<dbReference type="Pfam" id="PF03692">
    <property type="entry name" value="CxxCxxCC"/>
    <property type="match status" value="1"/>
</dbReference>
<dbReference type="PIRSF" id="PIRSF006173">
    <property type="entry name" value="UCP006173"/>
    <property type="match status" value="1"/>
</dbReference>
<evidence type="ECO:0000255" key="1">
    <source>
        <dbReference type="HAMAP-Rule" id="MF_00676"/>
    </source>
</evidence>
<sequence length="150" mass="17466">MMIAENAPFWRRKTLEQLSPQEWEALCDGCGLCCLQKLEDEDDNSVYYTRIACKLLDLDSCQCSDYPNRFAQVPDCIQLTPGKADQFKWLPSTCGYRLVSEGKDLPAWHHLVCGDRQQVHEQRISQSGRMLREQDVHEDDWEDHLIFRAS</sequence>
<proteinExistence type="inferred from homology"/>
<name>Y4117_PSEPG</name>
<accession>B0KSS1</accession>
<feature type="chain" id="PRO_1000147700" description="UPF0260 protein PputGB1_4117">
    <location>
        <begin position="1"/>
        <end position="150"/>
    </location>
</feature>
<comment type="similarity">
    <text evidence="1">Belongs to the UPF0260 family.</text>
</comment>
<protein>
    <recommendedName>
        <fullName evidence="1">UPF0260 protein PputGB1_4117</fullName>
    </recommendedName>
</protein>
<reference key="1">
    <citation type="submission" date="2008-01" db="EMBL/GenBank/DDBJ databases">
        <title>Complete sequence of Pseudomonas putida GB-1.</title>
        <authorList>
            <consortium name="US DOE Joint Genome Institute"/>
            <person name="Copeland A."/>
            <person name="Lucas S."/>
            <person name="Lapidus A."/>
            <person name="Barry K."/>
            <person name="Glavina del Rio T."/>
            <person name="Dalin E."/>
            <person name="Tice H."/>
            <person name="Pitluck S."/>
            <person name="Bruce D."/>
            <person name="Goodwin L."/>
            <person name="Chertkov O."/>
            <person name="Brettin T."/>
            <person name="Detter J.C."/>
            <person name="Han C."/>
            <person name="Kuske C.R."/>
            <person name="Schmutz J."/>
            <person name="Larimer F."/>
            <person name="Land M."/>
            <person name="Hauser L."/>
            <person name="Kyrpides N."/>
            <person name="Kim E."/>
            <person name="McCarthy J.K."/>
            <person name="Richardson P."/>
        </authorList>
    </citation>
    <scope>NUCLEOTIDE SEQUENCE [LARGE SCALE GENOMIC DNA]</scope>
    <source>
        <strain>GB-1</strain>
    </source>
</reference>
<organism>
    <name type="scientific">Pseudomonas putida (strain GB-1)</name>
    <dbReference type="NCBI Taxonomy" id="76869"/>
    <lineage>
        <taxon>Bacteria</taxon>
        <taxon>Pseudomonadati</taxon>
        <taxon>Pseudomonadota</taxon>
        <taxon>Gammaproteobacteria</taxon>
        <taxon>Pseudomonadales</taxon>
        <taxon>Pseudomonadaceae</taxon>
        <taxon>Pseudomonas</taxon>
    </lineage>
</organism>